<accession>Q8A883</accession>
<organism>
    <name type="scientific">Bacteroides thetaiotaomicron (strain ATCC 29148 / DSM 2079 / JCM 5827 / CCUG 10774 / NCTC 10582 / VPI-5482 / E50)</name>
    <dbReference type="NCBI Taxonomy" id="226186"/>
    <lineage>
        <taxon>Bacteria</taxon>
        <taxon>Pseudomonadati</taxon>
        <taxon>Bacteroidota</taxon>
        <taxon>Bacteroidia</taxon>
        <taxon>Bacteroidales</taxon>
        <taxon>Bacteroidaceae</taxon>
        <taxon>Bacteroides</taxon>
    </lineage>
</organism>
<sequence length="463" mass="51878">MNMQEDKSIIEVSHVSKFFGDKTALDDVTLNVKKGEFVTILGPSGCGKTTLLRLIAGFQTASEGEIRISGKEITQTPPHKRPVNTVFQKYALFPHLNVYDNIAFGLKLKKTPKQTIGKKVKAALKMVGMTDYEYRDVDSLSGGQQQRVAIARAIVNEPEVLLLDEPLAALDLKMRKDMQMELKEMHKSLGITFVYVTHDQEEALTLSDTIVVMSEGKIQQIGTPIDIYNEPINSFVADFIGESNILNGTMIHDKLVRFCGTEFECVDEGFGENTPVDVVIRPEDLYIFPVSEMAQLTGVVQTSIFKGVHYEMTVLCGGYEFLVQDYHHFEVGAEVGLLVKPFDIHIMKKERVCNTFEGKLQDATHVEFLGCTFECASVEGLESGTDVKVEVDFDKVILQDNEEDGTLTGEVKFILYKGDHYHLTVWSDWDENVFVDTNDVWDDGDRVGITIPPDAIRVIKITD</sequence>
<evidence type="ECO:0000255" key="1">
    <source>
        <dbReference type="HAMAP-Rule" id="MF_01726"/>
    </source>
</evidence>
<comment type="function">
    <text evidence="1">Part of the ABC transporter complex PotABCD involved in spermidine/putrescine import. Responsible for energy coupling to the transport system.</text>
</comment>
<comment type="catalytic activity">
    <reaction evidence="1">
        <text>ATP + H2O + polyamine-[polyamine-binding protein]Side 1 = ADP + phosphate + polyamineSide 2 + [polyamine-binding protein]Side 1.</text>
        <dbReference type="EC" id="7.6.2.11"/>
    </reaction>
</comment>
<comment type="subunit">
    <text evidence="1">The complex is composed of two ATP-binding proteins (PotA), two transmembrane proteins (PotB and PotC) and a solute-binding protein (PotD).</text>
</comment>
<comment type="subcellular location">
    <subcellularLocation>
        <location evidence="1">Cell inner membrane</location>
        <topology evidence="1">Peripheral membrane protein</topology>
    </subcellularLocation>
</comment>
<comment type="similarity">
    <text evidence="1">Belongs to the ABC transporter superfamily. Spermidine/putrescine importer (TC 3.A.1.11.1) family.</text>
</comment>
<keyword id="KW-0067">ATP-binding</keyword>
<keyword id="KW-0997">Cell inner membrane</keyword>
<keyword id="KW-1003">Cell membrane</keyword>
<keyword id="KW-0472">Membrane</keyword>
<keyword id="KW-0547">Nucleotide-binding</keyword>
<keyword id="KW-1185">Reference proteome</keyword>
<keyword id="KW-1278">Translocase</keyword>
<keyword id="KW-0813">Transport</keyword>
<protein>
    <recommendedName>
        <fullName evidence="1">Spermidine/putrescine import ATP-binding protein PotA</fullName>
        <ecNumber evidence="1">7.6.2.11</ecNumber>
    </recommendedName>
</protein>
<proteinExistence type="inferred from homology"/>
<gene>
    <name evidence="1" type="primary">potA</name>
    <name type="ordered locus">BT_1291</name>
</gene>
<name>POTA_BACTN</name>
<reference key="1">
    <citation type="journal article" date="2003" name="Science">
        <title>A genomic view of the human-Bacteroides thetaiotaomicron symbiosis.</title>
        <authorList>
            <person name="Xu J."/>
            <person name="Bjursell M.K."/>
            <person name="Himrod J."/>
            <person name="Deng S."/>
            <person name="Carmichael L.K."/>
            <person name="Chiang H.C."/>
            <person name="Hooper L.V."/>
            <person name="Gordon J.I."/>
        </authorList>
    </citation>
    <scope>NUCLEOTIDE SEQUENCE [LARGE SCALE GENOMIC DNA]</scope>
    <source>
        <strain>ATCC 29148 / DSM 2079 / JCM 5827 / CCUG 10774 / NCTC 10582 / VPI-5482 / E50</strain>
    </source>
</reference>
<feature type="chain" id="PRO_0000286199" description="Spermidine/putrescine import ATP-binding protein PotA">
    <location>
        <begin position="1"/>
        <end position="463"/>
    </location>
</feature>
<feature type="domain" description="ABC transporter" evidence="1">
    <location>
        <begin position="10"/>
        <end position="240"/>
    </location>
</feature>
<feature type="binding site" evidence="1">
    <location>
        <begin position="42"/>
        <end position="49"/>
    </location>
    <ligand>
        <name>ATP</name>
        <dbReference type="ChEBI" id="CHEBI:30616"/>
    </ligand>
</feature>
<dbReference type="EC" id="7.6.2.11" evidence="1"/>
<dbReference type="EMBL" id="AE015928">
    <property type="protein sequence ID" value="AAO76398.1"/>
    <property type="molecule type" value="Genomic_DNA"/>
</dbReference>
<dbReference type="RefSeq" id="NP_810204.1">
    <property type="nucleotide sequence ID" value="NC_004663.1"/>
</dbReference>
<dbReference type="RefSeq" id="WP_008762997.1">
    <property type="nucleotide sequence ID" value="NZ_UYXG01000017.1"/>
</dbReference>
<dbReference type="SMR" id="Q8A883"/>
<dbReference type="FunCoup" id="Q8A883">
    <property type="interactions" value="206"/>
</dbReference>
<dbReference type="STRING" id="226186.BT_1291"/>
<dbReference type="PaxDb" id="226186-BT_1291"/>
<dbReference type="EnsemblBacteria" id="AAO76398">
    <property type="protein sequence ID" value="AAO76398"/>
    <property type="gene ID" value="BT_1291"/>
</dbReference>
<dbReference type="GeneID" id="60927267"/>
<dbReference type="KEGG" id="bth:BT_1291"/>
<dbReference type="PATRIC" id="fig|226186.12.peg.1318"/>
<dbReference type="eggNOG" id="COG3842">
    <property type="taxonomic scope" value="Bacteria"/>
</dbReference>
<dbReference type="HOGENOM" id="CLU_000604_1_1_10"/>
<dbReference type="InParanoid" id="Q8A883"/>
<dbReference type="OrthoDB" id="1114670at2"/>
<dbReference type="Proteomes" id="UP000001414">
    <property type="component" value="Chromosome"/>
</dbReference>
<dbReference type="GO" id="GO:0043190">
    <property type="term" value="C:ATP-binding cassette (ABC) transporter complex"/>
    <property type="evidence" value="ECO:0007669"/>
    <property type="project" value="InterPro"/>
</dbReference>
<dbReference type="GO" id="GO:0015594">
    <property type="term" value="F:ABC-type putrescine transporter activity"/>
    <property type="evidence" value="ECO:0007669"/>
    <property type="project" value="InterPro"/>
</dbReference>
<dbReference type="GO" id="GO:0005524">
    <property type="term" value="F:ATP binding"/>
    <property type="evidence" value="ECO:0007669"/>
    <property type="project" value="UniProtKB-KW"/>
</dbReference>
<dbReference type="GO" id="GO:0016887">
    <property type="term" value="F:ATP hydrolysis activity"/>
    <property type="evidence" value="ECO:0007669"/>
    <property type="project" value="InterPro"/>
</dbReference>
<dbReference type="CDD" id="cd03300">
    <property type="entry name" value="ABC_PotA_N"/>
    <property type="match status" value="1"/>
</dbReference>
<dbReference type="FunFam" id="3.40.50.300:FF:000133">
    <property type="entry name" value="Spermidine/putrescine import ATP-binding protein PotA"/>
    <property type="match status" value="1"/>
</dbReference>
<dbReference type="Gene3D" id="2.40.50.100">
    <property type="match status" value="1"/>
</dbReference>
<dbReference type="Gene3D" id="3.40.50.300">
    <property type="entry name" value="P-loop containing nucleotide triphosphate hydrolases"/>
    <property type="match status" value="1"/>
</dbReference>
<dbReference type="InterPro" id="IPR003593">
    <property type="entry name" value="AAA+_ATPase"/>
</dbReference>
<dbReference type="InterPro" id="IPR050093">
    <property type="entry name" value="ABC_SmlMolc_Importer"/>
</dbReference>
<dbReference type="InterPro" id="IPR003439">
    <property type="entry name" value="ABC_transporter-like_ATP-bd"/>
</dbReference>
<dbReference type="InterPro" id="IPR017871">
    <property type="entry name" value="ABC_transporter-like_CS"/>
</dbReference>
<dbReference type="InterPro" id="IPR008995">
    <property type="entry name" value="Mo/tungstate-bd_C_term_dom"/>
</dbReference>
<dbReference type="InterPro" id="IPR027417">
    <property type="entry name" value="P-loop_NTPase"/>
</dbReference>
<dbReference type="InterPro" id="IPR005893">
    <property type="entry name" value="PotA-like"/>
</dbReference>
<dbReference type="InterPro" id="IPR017879">
    <property type="entry name" value="PotA_ATP-bd"/>
</dbReference>
<dbReference type="InterPro" id="IPR013611">
    <property type="entry name" value="Transp-assoc_OB_typ2"/>
</dbReference>
<dbReference type="NCBIfam" id="TIGR01187">
    <property type="entry name" value="potA"/>
    <property type="match status" value="1"/>
</dbReference>
<dbReference type="PANTHER" id="PTHR42781">
    <property type="entry name" value="SPERMIDINE/PUTRESCINE IMPORT ATP-BINDING PROTEIN POTA"/>
    <property type="match status" value="1"/>
</dbReference>
<dbReference type="PANTHER" id="PTHR42781:SF4">
    <property type="entry name" value="SPERMIDINE_PUTRESCINE IMPORT ATP-BINDING PROTEIN POTA"/>
    <property type="match status" value="1"/>
</dbReference>
<dbReference type="Pfam" id="PF00005">
    <property type="entry name" value="ABC_tran"/>
    <property type="match status" value="1"/>
</dbReference>
<dbReference type="Pfam" id="PF08402">
    <property type="entry name" value="TOBE_2"/>
    <property type="match status" value="2"/>
</dbReference>
<dbReference type="SMART" id="SM00382">
    <property type="entry name" value="AAA"/>
    <property type="match status" value="1"/>
</dbReference>
<dbReference type="SUPFAM" id="SSF50331">
    <property type="entry name" value="MOP-like"/>
    <property type="match status" value="2"/>
</dbReference>
<dbReference type="SUPFAM" id="SSF52540">
    <property type="entry name" value="P-loop containing nucleoside triphosphate hydrolases"/>
    <property type="match status" value="1"/>
</dbReference>
<dbReference type="PROSITE" id="PS00211">
    <property type="entry name" value="ABC_TRANSPORTER_1"/>
    <property type="match status" value="1"/>
</dbReference>
<dbReference type="PROSITE" id="PS50893">
    <property type="entry name" value="ABC_TRANSPORTER_2"/>
    <property type="match status" value="1"/>
</dbReference>
<dbReference type="PROSITE" id="PS51305">
    <property type="entry name" value="POTA"/>
    <property type="match status" value="1"/>
</dbReference>